<dbReference type="EC" id="2.5.1.55"/>
<dbReference type="EMBL" id="BA000012">
    <property type="protein sequence ID" value="BAB47967.1"/>
    <property type="status" value="ALT_INIT"/>
    <property type="molecule type" value="Genomic_DNA"/>
</dbReference>
<dbReference type="SMR" id="Q98MZ6"/>
<dbReference type="KEGG" id="mlo:mlr0374"/>
<dbReference type="PATRIC" id="fig|266835.9.peg.297"/>
<dbReference type="eggNOG" id="COG2877">
    <property type="taxonomic scope" value="Bacteria"/>
</dbReference>
<dbReference type="HOGENOM" id="CLU_036666_0_0_5"/>
<dbReference type="UniPathway" id="UPA00030"/>
<dbReference type="UniPathway" id="UPA00357">
    <property type="reaction ID" value="UER00474"/>
</dbReference>
<dbReference type="Proteomes" id="UP000000552">
    <property type="component" value="Chromosome"/>
</dbReference>
<dbReference type="GO" id="GO:0005737">
    <property type="term" value="C:cytoplasm"/>
    <property type="evidence" value="ECO:0007669"/>
    <property type="project" value="UniProtKB-SubCell"/>
</dbReference>
<dbReference type="GO" id="GO:0008676">
    <property type="term" value="F:3-deoxy-8-phosphooctulonate synthase activity"/>
    <property type="evidence" value="ECO:0007669"/>
    <property type="project" value="UniProtKB-UniRule"/>
</dbReference>
<dbReference type="GO" id="GO:0019294">
    <property type="term" value="P:keto-3-deoxy-D-manno-octulosonic acid biosynthetic process"/>
    <property type="evidence" value="ECO:0007669"/>
    <property type="project" value="UniProtKB-UniRule"/>
</dbReference>
<dbReference type="Gene3D" id="3.20.20.70">
    <property type="entry name" value="Aldolase class I"/>
    <property type="match status" value="1"/>
</dbReference>
<dbReference type="HAMAP" id="MF_00056">
    <property type="entry name" value="KDO8P_synth"/>
    <property type="match status" value="1"/>
</dbReference>
<dbReference type="InterPro" id="IPR013785">
    <property type="entry name" value="Aldolase_TIM"/>
</dbReference>
<dbReference type="InterPro" id="IPR006218">
    <property type="entry name" value="DAHP1/KDSA"/>
</dbReference>
<dbReference type="InterPro" id="IPR006269">
    <property type="entry name" value="KDO8P_synthase"/>
</dbReference>
<dbReference type="NCBIfam" id="TIGR01362">
    <property type="entry name" value="KDO8P_synth"/>
    <property type="match status" value="1"/>
</dbReference>
<dbReference type="NCBIfam" id="NF003543">
    <property type="entry name" value="PRK05198.1"/>
    <property type="match status" value="1"/>
</dbReference>
<dbReference type="PANTHER" id="PTHR21057">
    <property type="entry name" value="PHOSPHO-2-DEHYDRO-3-DEOXYHEPTONATE ALDOLASE"/>
    <property type="match status" value="1"/>
</dbReference>
<dbReference type="Pfam" id="PF00793">
    <property type="entry name" value="DAHP_synth_1"/>
    <property type="match status" value="1"/>
</dbReference>
<dbReference type="SUPFAM" id="SSF51569">
    <property type="entry name" value="Aldolase"/>
    <property type="match status" value="1"/>
</dbReference>
<gene>
    <name type="primary">kdsA</name>
    <name type="ordered locus">mlr0374</name>
</gene>
<reference key="1">
    <citation type="journal article" date="2000" name="DNA Res.">
        <title>Complete genome structure of the nitrogen-fixing symbiotic bacterium Mesorhizobium loti.</title>
        <authorList>
            <person name="Kaneko T."/>
            <person name="Nakamura Y."/>
            <person name="Sato S."/>
            <person name="Asamizu E."/>
            <person name="Kato T."/>
            <person name="Sasamoto S."/>
            <person name="Watanabe A."/>
            <person name="Idesawa K."/>
            <person name="Ishikawa A."/>
            <person name="Kawashima K."/>
            <person name="Kimura T."/>
            <person name="Kishida Y."/>
            <person name="Kiyokawa C."/>
            <person name="Kohara M."/>
            <person name="Matsumoto M."/>
            <person name="Matsuno A."/>
            <person name="Mochizuki Y."/>
            <person name="Nakayama S."/>
            <person name="Nakazaki N."/>
            <person name="Shimpo S."/>
            <person name="Sugimoto M."/>
            <person name="Takeuchi C."/>
            <person name="Yamada M."/>
            <person name="Tabata S."/>
        </authorList>
    </citation>
    <scope>NUCLEOTIDE SEQUENCE [LARGE SCALE GENOMIC DNA]</scope>
    <source>
        <strain>LMG 29417 / CECT 9101 / MAFF 303099</strain>
    </source>
</reference>
<feature type="chain" id="PRO_0000187155" description="2-dehydro-3-deoxyphosphooctonate aldolase">
    <location>
        <begin position="1"/>
        <end position="277"/>
    </location>
</feature>
<organism>
    <name type="scientific">Mesorhizobium japonicum (strain LMG 29417 / CECT 9101 / MAFF 303099)</name>
    <name type="common">Mesorhizobium loti (strain MAFF 303099)</name>
    <dbReference type="NCBI Taxonomy" id="266835"/>
    <lineage>
        <taxon>Bacteria</taxon>
        <taxon>Pseudomonadati</taxon>
        <taxon>Pseudomonadota</taxon>
        <taxon>Alphaproteobacteria</taxon>
        <taxon>Hyphomicrobiales</taxon>
        <taxon>Phyllobacteriaceae</taxon>
        <taxon>Mesorhizobium</taxon>
    </lineage>
</organism>
<sequence>MAPNSSVTVGNVVFDNNAALALIAGPCQFESRQHAFDMAGALKELTARLGIGLVYKTSYDKANRTSLSATRGAGMDAALPVFDELRKEFSLPVLTDVHTEEQCAIVAPHVDVLQIPAFLSRQTDMLVAAAKTGKVINVKKGQFLAPWDMKNVVAKITGSGNPNVLTTERGASFGYNTLVSDMRALPVMAEIGAPVIFDATHSVQQPGGQGGSSGGERRFVETLARAAVAVGVAGVFIETHQDPDNSTSSDGPNMLPLKDMPALLERLMAFDRIAKGR</sequence>
<accession>Q98MZ6</accession>
<keyword id="KW-0963">Cytoplasm</keyword>
<keyword id="KW-0448">Lipopolysaccharide biosynthesis</keyword>
<keyword id="KW-0808">Transferase</keyword>
<name>KDSA_RHILO</name>
<evidence type="ECO:0000250" key="1"/>
<evidence type="ECO:0000305" key="2"/>
<proteinExistence type="inferred from homology"/>
<comment type="catalytic activity">
    <reaction>
        <text>D-arabinose 5-phosphate + phosphoenolpyruvate + H2O = 3-deoxy-alpha-D-manno-2-octulosonate-8-phosphate + phosphate</text>
        <dbReference type="Rhea" id="RHEA:14053"/>
        <dbReference type="ChEBI" id="CHEBI:15377"/>
        <dbReference type="ChEBI" id="CHEBI:43474"/>
        <dbReference type="ChEBI" id="CHEBI:57693"/>
        <dbReference type="ChEBI" id="CHEBI:58702"/>
        <dbReference type="ChEBI" id="CHEBI:85985"/>
        <dbReference type="EC" id="2.5.1.55"/>
    </reaction>
</comment>
<comment type="pathway">
    <text>Carbohydrate biosynthesis; 3-deoxy-D-manno-octulosonate biosynthesis; 3-deoxy-D-manno-octulosonate from D-ribulose 5-phosphate: step 2/3.</text>
</comment>
<comment type="pathway">
    <text>Bacterial outer membrane biogenesis; lipopolysaccharide biosynthesis.</text>
</comment>
<comment type="subcellular location">
    <subcellularLocation>
        <location evidence="1">Cytoplasm</location>
    </subcellularLocation>
</comment>
<comment type="similarity">
    <text evidence="2">Belongs to the KdsA family.</text>
</comment>
<comment type="sequence caution" evidence="2">
    <conflict type="erroneous initiation">
        <sequence resource="EMBL-CDS" id="BAB47967"/>
    </conflict>
</comment>
<protein>
    <recommendedName>
        <fullName>2-dehydro-3-deoxyphosphooctonate aldolase</fullName>
        <ecNumber>2.5.1.55</ecNumber>
    </recommendedName>
    <alternativeName>
        <fullName>3-deoxy-D-manno-octulosonic acid 8-phosphate synthase</fullName>
    </alternativeName>
    <alternativeName>
        <fullName>KDO-8-phosphate synthase</fullName>
        <shortName>KDO 8-P synthase</shortName>
        <shortName>KDOPS</shortName>
    </alternativeName>
    <alternativeName>
        <fullName>Phospho-2-dehydro-3-deoxyoctonate aldolase</fullName>
    </alternativeName>
</protein>